<protein>
    <recommendedName>
        <fullName evidence="1">Ribosome maturation factor RimP</fullName>
    </recommendedName>
</protein>
<organism>
    <name type="scientific">Clostridium botulinum (strain Okra / Type B1)</name>
    <dbReference type="NCBI Taxonomy" id="498213"/>
    <lineage>
        <taxon>Bacteria</taxon>
        <taxon>Bacillati</taxon>
        <taxon>Bacillota</taxon>
        <taxon>Clostridia</taxon>
        <taxon>Eubacteriales</taxon>
        <taxon>Clostridiaceae</taxon>
        <taxon>Clostridium</taxon>
    </lineage>
</organism>
<evidence type="ECO:0000255" key="1">
    <source>
        <dbReference type="HAMAP-Rule" id="MF_01077"/>
    </source>
</evidence>
<name>RIMP_CLOBK</name>
<accession>B1II53</accession>
<gene>
    <name evidence="1" type="primary">rimP</name>
    <name type="ordered locus">CLD_2218</name>
</gene>
<keyword id="KW-0963">Cytoplasm</keyword>
<keyword id="KW-0690">Ribosome biogenesis</keyword>
<reference key="1">
    <citation type="journal article" date="2007" name="PLoS ONE">
        <title>Analysis of the neurotoxin complex genes in Clostridium botulinum A1-A4 and B1 strains: BoNT/A3, /Ba4 and /B1 clusters are located within plasmids.</title>
        <authorList>
            <person name="Smith T.J."/>
            <person name="Hill K.K."/>
            <person name="Foley B.T."/>
            <person name="Detter J.C."/>
            <person name="Munk A.C."/>
            <person name="Bruce D.C."/>
            <person name="Doggett N.A."/>
            <person name="Smith L.A."/>
            <person name="Marks J.D."/>
            <person name="Xie G."/>
            <person name="Brettin T.S."/>
        </authorList>
    </citation>
    <scope>NUCLEOTIDE SEQUENCE [LARGE SCALE GENOMIC DNA]</scope>
    <source>
        <strain>Okra / Type B1</strain>
    </source>
</reference>
<sequence>MSKHSLIENLKKQIEPIAEGLDYELYHIEFVKEGKENYLRIYIDSENGVSLEGCEKVSRAVSELLDDIDPIQESYYLEVSSPGIDRVLYTDKHLQKYKGYNIVLNLYSPIDKKKKYEGELVDFNENEINIKVEENIVTIPREKISKTTLKGEL</sequence>
<feature type="chain" id="PRO_1000136748" description="Ribosome maturation factor RimP">
    <location>
        <begin position="1"/>
        <end position="153"/>
    </location>
</feature>
<dbReference type="EMBL" id="CP000939">
    <property type="protein sequence ID" value="ACA43691.1"/>
    <property type="molecule type" value="Genomic_DNA"/>
</dbReference>
<dbReference type="RefSeq" id="WP_003406062.1">
    <property type="nucleotide sequence ID" value="NC_010516.1"/>
</dbReference>
<dbReference type="SMR" id="B1II53"/>
<dbReference type="KEGG" id="cbb:CLD_2218"/>
<dbReference type="HOGENOM" id="CLU_070525_2_0_9"/>
<dbReference type="Proteomes" id="UP000008541">
    <property type="component" value="Chromosome"/>
</dbReference>
<dbReference type="GO" id="GO:0005829">
    <property type="term" value="C:cytosol"/>
    <property type="evidence" value="ECO:0007669"/>
    <property type="project" value="TreeGrafter"/>
</dbReference>
<dbReference type="GO" id="GO:0000028">
    <property type="term" value="P:ribosomal small subunit assembly"/>
    <property type="evidence" value="ECO:0007669"/>
    <property type="project" value="TreeGrafter"/>
</dbReference>
<dbReference type="GO" id="GO:0006412">
    <property type="term" value="P:translation"/>
    <property type="evidence" value="ECO:0007669"/>
    <property type="project" value="TreeGrafter"/>
</dbReference>
<dbReference type="CDD" id="cd01734">
    <property type="entry name" value="YlxS_C"/>
    <property type="match status" value="1"/>
</dbReference>
<dbReference type="FunFam" id="2.30.30.180:FF:000007">
    <property type="entry name" value="Ribosome maturation factor RimP"/>
    <property type="match status" value="1"/>
</dbReference>
<dbReference type="FunFam" id="3.30.300.70:FF:000001">
    <property type="entry name" value="Ribosome maturation factor RimP"/>
    <property type="match status" value="1"/>
</dbReference>
<dbReference type="Gene3D" id="2.30.30.180">
    <property type="entry name" value="Ribosome maturation factor RimP, C-terminal domain"/>
    <property type="match status" value="1"/>
</dbReference>
<dbReference type="Gene3D" id="3.30.300.70">
    <property type="entry name" value="RimP-like superfamily, N-terminal"/>
    <property type="match status" value="1"/>
</dbReference>
<dbReference type="HAMAP" id="MF_01077">
    <property type="entry name" value="RimP"/>
    <property type="match status" value="1"/>
</dbReference>
<dbReference type="InterPro" id="IPR003728">
    <property type="entry name" value="Ribosome_maturation_RimP"/>
</dbReference>
<dbReference type="InterPro" id="IPR028998">
    <property type="entry name" value="RimP_C"/>
</dbReference>
<dbReference type="InterPro" id="IPR036847">
    <property type="entry name" value="RimP_C_sf"/>
</dbReference>
<dbReference type="InterPro" id="IPR028989">
    <property type="entry name" value="RimP_N"/>
</dbReference>
<dbReference type="InterPro" id="IPR035956">
    <property type="entry name" value="RimP_N_sf"/>
</dbReference>
<dbReference type="NCBIfam" id="NF000934">
    <property type="entry name" value="PRK00092.3-1"/>
    <property type="match status" value="1"/>
</dbReference>
<dbReference type="PANTHER" id="PTHR33867">
    <property type="entry name" value="RIBOSOME MATURATION FACTOR RIMP"/>
    <property type="match status" value="1"/>
</dbReference>
<dbReference type="PANTHER" id="PTHR33867:SF1">
    <property type="entry name" value="RIBOSOME MATURATION FACTOR RIMP"/>
    <property type="match status" value="1"/>
</dbReference>
<dbReference type="Pfam" id="PF17384">
    <property type="entry name" value="DUF150_C"/>
    <property type="match status" value="1"/>
</dbReference>
<dbReference type="Pfam" id="PF02576">
    <property type="entry name" value="RimP_N"/>
    <property type="match status" value="1"/>
</dbReference>
<dbReference type="SUPFAM" id="SSF74942">
    <property type="entry name" value="YhbC-like, C-terminal domain"/>
    <property type="match status" value="1"/>
</dbReference>
<dbReference type="SUPFAM" id="SSF75420">
    <property type="entry name" value="YhbC-like, N-terminal domain"/>
    <property type="match status" value="1"/>
</dbReference>
<proteinExistence type="inferred from homology"/>
<comment type="function">
    <text evidence="1">Required for maturation of 30S ribosomal subunits.</text>
</comment>
<comment type="subcellular location">
    <subcellularLocation>
        <location evidence="1">Cytoplasm</location>
    </subcellularLocation>
</comment>
<comment type="similarity">
    <text evidence="1">Belongs to the RimP family.</text>
</comment>